<gene>
    <name evidence="1" type="primary">nadD</name>
    <name type="ordered locus">PGN_2007</name>
</gene>
<sequence>MLTGLFFGSFNPMHIGHLALANYLTEYTPIRQLWFVPSPLNPLKNTQELLPYDLRCELIEQAIRKDIRFQVLRIEELLPSPHYTIRTLRALSMLYPHHRFALLIGADNWQSFDRWKDHHRLMAKYELIIYPRFGYEVNDTTLPTGCRYIHDAPRIEISSTQIRTSILEGKDLRYWLPLPESQDVIASALQSCLSPKR</sequence>
<feature type="chain" id="PRO_1000100787" description="Probable nicotinate-nucleotide adenylyltransferase">
    <location>
        <begin position="1"/>
        <end position="197"/>
    </location>
</feature>
<comment type="function">
    <text evidence="1">Catalyzes the reversible adenylation of nicotinate mononucleotide (NaMN) to nicotinic acid adenine dinucleotide (NaAD).</text>
</comment>
<comment type="catalytic activity">
    <reaction evidence="1">
        <text>nicotinate beta-D-ribonucleotide + ATP + H(+) = deamido-NAD(+) + diphosphate</text>
        <dbReference type="Rhea" id="RHEA:22860"/>
        <dbReference type="ChEBI" id="CHEBI:15378"/>
        <dbReference type="ChEBI" id="CHEBI:30616"/>
        <dbReference type="ChEBI" id="CHEBI:33019"/>
        <dbReference type="ChEBI" id="CHEBI:57502"/>
        <dbReference type="ChEBI" id="CHEBI:58437"/>
        <dbReference type="EC" id="2.7.7.18"/>
    </reaction>
</comment>
<comment type="pathway">
    <text evidence="1">Cofactor biosynthesis; NAD(+) biosynthesis; deamido-NAD(+) from nicotinate D-ribonucleotide: step 1/1.</text>
</comment>
<comment type="similarity">
    <text evidence="1">Belongs to the NadD family.</text>
</comment>
<organism>
    <name type="scientific">Porphyromonas gingivalis (strain ATCC 33277 / DSM 20709 / CIP 103683 / JCM 12257 / NCTC 11834 / 2561)</name>
    <dbReference type="NCBI Taxonomy" id="431947"/>
    <lineage>
        <taxon>Bacteria</taxon>
        <taxon>Pseudomonadati</taxon>
        <taxon>Bacteroidota</taxon>
        <taxon>Bacteroidia</taxon>
        <taxon>Bacteroidales</taxon>
        <taxon>Porphyromonadaceae</taxon>
        <taxon>Porphyromonas</taxon>
    </lineage>
</organism>
<dbReference type="EC" id="2.7.7.18" evidence="1"/>
<dbReference type="EMBL" id="AP009380">
    <property type="protein sequence ID" value="BAG34525.1"/>
    <property type="molecule type" value="Genomic_DNA"/>
</dbReference>
<dbReference type="RefSeq" id="WP_012458681.1">
    <property type="nucleotide sequence ID" value="NC_010729.1"/>
</dbReference>
<dbReference type="SMR" id="B2RMD0"/>
<dbReference type="GeneID" id="29257144"/>
<dbReference type="KEGG" id="pgn:PGN_2007"/>
<dbReference type="eggNOG" id="COG1057">
    <property type="taxonomic scope" value="Bacteria"/>
</dbReference>
<dbReference type="HOGENOM" id="CLU_069765_3_3_10"/>
<dbReference type="OrthoDB" id="5295945at2"/>
<dbReference type="BioCyc" id="PGIN431947:G1G2V-2241-MONOMER"/>
<dbReference type="UniPathway" id="UPA00253">
    <property type="reaction ID" value="UER00332"/>
</dbReference>
<dbReference type="Proteomes" id="UP000008842">
    <property type="component" value="Chromosome"/>
</dbReference>
<dbReference type="GO" id="GO:0005524">
    <property type="term" value="F:ATP binding"/>
    <property type="evidence" value="ECO:0007669"/>
    <property type="project" value="UniProtKB-KW"/>
</dbReference>
<dbReference type="GO" id="GO:0004515">
    <property type="term" value="F:nicotinate-nucleotide adenylyltransferase activity"/>
    <property type="evidence" value="ECO:0007669"/>
    <property type="project" value="UniProtKB-UniRule"/>
</dbReference>
<dbReference type="GO" id="GO:0009435">
    <property type="term" value="P:NAD biosynthetic process"/>
    <property type="evidence" value="ECO:0007669"/>
    <property type="project" value="UniProtKB-UniRule"/>
</dbReference>
<dbReference type="CDD" id="cd02165">
    <property type="entry name" value="NMNAT"/>
    <property type="match status" value="1"/>
</dbReference>
<dbReference type="Gene3D" id="3.40.50.620">
    <property type="entry name" value="HUPs"/>
    <property type="match status" value="1"/>
</dbReference>
<dbReference type="HAMAP" id="MF_00244">
    <property type="entry name" value="NaMN_adenylyltr"/>
    <property type="match status" value="1"/>
</dbReference>
<dbReference type="InterPro" id="IPR004821">
    <property type="entry name" value="Cyt_trans-like"/>
</dbReference>
<dbReference type="InterPro" id="IPR005248">
    <property type="entry name" value="NadD/NMNAT"/>
</dbReference>
<dbReference type="InterPro" id="IPR014729">
    <property type="entry name" value="Rossmann-like_a/b/a_fold"/>
</dbReference>
<dbReference type="NCBIfam" id="TIGR00482">
    <property type="entry name" value="nicotinate (nicotinamide) nucleotide adenylyltransferase"/>
    <property type="match status" value="1"/>
</dbReference>
<dbReference type="PANTHER" id="PTHR39321">
    <property type="entry name" value="NICOTINATE-NUCLEOTIDE ADENYLYLTRANSFERASE-RELATED"/>
    <property type="match status" value="1"/>
</dbReference>
<dbReference type="PANTHER" id="PTHR39321:SF3">
    <property type="entry name" value="PHOSPHOPANTETHEINE ADENYLYLTRANSFERASE"/>
    <property type="match status" value="1"/>
</dbReference>
<dbReference type="Pfam" id="PF01467">
    <property type="entry name" value="CTP_transf_like"/>
    <property type="match status" value="1"/>
</dbReference>
<dbReference type="SUPFAM" id="SSF52374">
    <property type="entry name" value="Nucleotidylyl transferase"/>
    <property type="match status" value="1"/>
</dbReference>
<name>NADD_PORG3</name>
<evidence type="ECO:0000255" key="1">
    <source>
        <dbReference type="HAMAP-Rule" id="MF_00244"/>
    </source>
</evidence>
<protein>
    <recommendedName>
        <fullName evidence="1">Probable nicotinate-nucleotide adenylyltransferase</fullName>
        <ecNumber evidence="1">2.7.7.18</ecNumber>
    </recommendedName>
    <alternativeName>
        <fullName evidence="1">Deamido-NAD(+) diphosphorylase</fullName>
    </alternativeName>
    <alternativeName>
        <fullName evidence="1">Deamido-NAD(+) pyrophosphorylase</fullName>
    </alternativeName>
    <alternativeName>
        <fullName evidence="1">Nicotinate mononucleotide adenylyltransferase</fullName>
        <shortName evidence="1">NaMN adenylyltransferase</shortName>
    </alternativeName>
</protein>
<accession>B2RMD0</accession>
<reference key="1">
    <citation type="journal article" date="2008" name="DNA Res.">
        <title>Determination of the genome sequence of Porphyromonas gingivalis strain ATCC 33277 and genomic comparison with strain W83 revealed extensive genome rearrangements in P. gingivalis.</title>
        <authorList>
            <person name="Naito M."/>
            <person name="Hirakawa H."/>
            <person name="Yamashita A."/>
            <person name="Ohara N."/>
            <person name="Shoji M."/>
            <person name="Yukitake H."/>
            <person name="Nakayama K."/>
            <person name="Toh H."/>
            <person name="Yoshimura F."/>
            <person name="Kuhara S."/>
            <person name="Hattori M."/>
            <person name="Hayashi T."/>
            <person name="Nakayama K."/>
        </authorList>
    </citation>
    <scope>NUCLEOTIDE SEQUENCE [LARGE SCALE GENOMIC DNA]</scope>
    <source>
        <strain>ATCC 33277 / DSM 20709 / CIP 103683 / JCM 12257 / NCTC 11834 / 2561</strain>
    </source>
</reference>
<keyword id="KW-0067">ATP-binding</keyword>
<keyword id="KW-0520">NAD</keyword>
<keyword id="KW-0547">Nucleotide-binding</keyword>
<keyword id="KW-0548">Nucleotidyltransferase</keyword>
<keyword id="KW-0662">Pyridine nucleotide biosynthesis</keyword>
<keyword id="KW-0808">Transferase</keyword>
<proteinExistence type="inferred from homology"/>